<evidence type="ECO:0000250" key="1">
    <source>
        <dbReference type="UniProtKB" id="Q08967"/>
    </source>
</evidence>
<evidence type="ECO:0000255" key="2"/>
<evidence type="ECO:0000255" key="3">
    <source>
        <dbReference type="PROSITE-ProRule" id="PRU00498"/>
    </source>
</evidence>
<evidence type="ECO:0000256" key="4">
    <source>
        <dbReference type="SAM" id="MobiDB-lite"/>
    </source>
</evidence>
<evidence type="ECO:0000269" key="5">
    <source>
    </source>
</evidence>
<evidence type="ECO:0000303" key="6">
    <source>
    </source>
</evidence>
<evidence type="ECO:0000305" key="7"/>
<evidence type="ECO:0000305" key="8">
    <source>
    </source>
</evidence>
<proteinExistence type="inferred from homology"/>
<sequence>MRIPLFILTFLFTFFSLATTPVSADSGVLYTDAVTYCAEAKAVIVDEFDITYHRSNGSVTFSFSLASVEPNLNTSVNLYINAYGIQIINQTLELCDLLQGVICPLPQVNFTGYGTYPIPAEYLSKIPSIAYTVPNIEAYARVQLIRVENNEVAACLQATLANGKTAHQKGVIWASAIFTLVAFLVAIWHTASGTSTSPIQYRWFDILFIFQVAAASGLLHLNYPLVYTNFVQNFHWALGLFYSSSMQSSISKMREKTGGSMDSTAYSEVQYINRKLSPYNVYMDDNGILSSPESLAAFFKESALSKRSLEHFAKRATIPSVLAQNMTTDINTGLPVYTNTLRIPEANAYDTIWFVFLALIGIFIAFHVLLFGMVLLFDRMGRNRSHLGWAARLRRMWWPFCVGNSLRLCLIGFFPIWIFAFWQFHIGDSGLSIFWAVFGILLTLVPLATAFLLSLLRARRISSTSPEINSLYTSFRYFHSIGVLYRQYRQKFHYFWFTPFVLAMIARAGFIAFGPASAWAQVIGNLVVEFIVLVALLACRPHKDKKGDWLGAFLSICRLIAIGLLIAFIPDMNVKPIPRAVIAFVIIVFYGVPVVFLFVGFLWNIGYGYLWCKHSTRVEDGLEVERFSPTSSNSSVPPPMMKNVDAATFVSSDGAAASRGSLSMGGAGASGAGLAGGAAAAGTGLGRRSSLIEPVGDNVYEASASSADGALSPPPVTAYNPYGKEEIGYPYDPQDSRLAYEQAAMGRGGVNGPGSPTDEKQWSRRY</sequence>
<gene>
    <name evidence="6" type="primary">flc1</name>
    <name type="ORF">CNAG_04283</name>
</gene>
<protein>
    <recommendedName>
        <fullName evidence="6">TRP-like ion channel protein flc1</fullName>
        <ecNumber evidence="8">7.-.-.-</ecNumber>
    </recommendedName>
</protein>
<feature type="signal peptide" evidence="2">
    <location>
        <begin position="1"/>
        <end position="24"/>
    </location>
</feature>
<feature type="chain" id="PRO_5015095725" description="TRP-like ion channel protein flc1">
    <location>
        <begin position="25"/>
        <end position="766"/>
    </location>
</feature>
<feature type="topological domain" description="Lumenal" evidence="7">
    <location>
        <begin position="25"/>
        <end position="170"/>
    </location>
</feature>
<feature type="transmembrane region" description="Helical" evidence="2">
    <location>
        <begin position="171"/>
        <end position="191"/>
    </location>
</feature>
<feature type="topological domain" description="Cytoplasmic" evidence="7">
    <location>
        <begin position="192"/>
        <end position="205"/>
    </location>
</feature>
<feature type="transmembrane region" description="Helical" evidence="2">
    <location>
        <begin position="206"/>
        <end position="226"/>
    </location>
</feature>
<feature type="topological domain" description="Lumenal" evidence="7">
    <location>
        <begin position="227"/>
        <end position="351"/>
    </location>
</feature>
<feature type="transmembrane region" description="Helical" evidence="2">
    <location>
        <begin position="352"/>
        <end position="372"/>
    </location>
</feature>
<feature type="topological domain" description="Cytoplasmic" evidence="7">
    <location>
        <begin position="373"/>
        <end position="407"/>
    </location>
</feature>
<feature type="transmembrane region" description="Helical" evidence="2">
    <location>
        <begin position="408"/>
        <end position="428"/>
    </location>
</feature>
<feature type="topological domain" description="Lumenal" evidence="7">
    <location>
        <begin position="429"/>
        <end position="432"/>
    </location>
</feature>
<feature type="transmembrane region" description="Helical" evidence="2">
    <location>
        <begin position="433"/>
        <end position="453"/>
    </location>
</feature>
<feature type="topological domain" description="Cytoplasmic" evidence="7">
    <location>
        <begin position="454"/>
        <end position="493"/>
    </location>
</feature>
<feature type="transmembrane region" description="Helical" evidence="2">
    <location>
        <begin position="494"/>
        <end position="514"/>
    </location>
</feature>
<feature type="topological domain" description="Lumenal" evidence="7">
    <location>
        <begin position="515"/>
        <end position="517"/>
    </location>
</feature>
<feature type="transmembrane region" description="Helical" evidence="2">
    <location>
        <begin position="518"/>
        <end position="538"/>
    </location>
</feature>
<feature type="topological domain" description="Cytoplasmic" evidence="7">
    <location>
        <begin position="539"/>
        <end position="548"/>
    </location>
</feature>
<feature type="transmembrane region" description="Helical" evidence="2">
    <location>
        <begin position="549"/>
        <end position="569"/>
    </location>
</feature>
<feature type="topological domain" description="Lumenal" evidence="7">
    <location>
        <begin position="570"/>
        <end position="580"/>
    </location>
</feature>
<feature type="transmembrane region" description="Helical" evidence="2">
    <location>
        <begin position="581"/>
        <end position="601"/>
    </location>
</feature>
<feature type="topological domain" description="Cytoplasmic" evidence="7">
    <location>
        <begin position="602"/>
        <end position="766"/>
    </location>
</feature>
<feature type="region of interest" description="Disordered" evidence="4">
    <location>
        <begin position="704"/>
        <end position="766"/>
    </location>
</feature>
<feature type="compositionally biased region" description="Basic and acidic residues" evidence="4">
    <location>
        <begin position="757"/>
        <end position="766"/>
    </location>
</feature>
<feature type="glycosylation site" description="N-linked (GlcNAc...) asparagine" evidence="3">
    <location>
        <position position="56"/>
    </location>
</feature>
<feature type="glycosylation site" description="N-linked (GlcNAc...) asparagine" evidence="3">
    <location>
        <position position="73"/>
    </location>
</feature>
<feature type="glycosylation site" description="N-linked (GlcNAc...) asparagine" evidence="3">
    <location>
        <position position="89"/>
    </location>
</feature>
<feature type="glycosylation site" description="N-linked (GlcNAc...) asparagine" evidence="3">
    <location>
        <position position="109"/>
    </location>
</feature>
<feature type="glycosylation site" description="N-linked (GlcNAc...) asparagine" evidence="3">
    <location>
        <position position="325"/>
    </location>
</feature>
<reference key="1">
    <citation type="journal article" date="2014" name="PLoS Genet.">
        <title>Analysis of the genome and transcriptome of Cryptococcus neoformans var. grubii reveals complex RNA expression and microevolution leading to virulence attenuation.</title>
        <authorList>
            <person name="Janbon G."/>
            <person name="Ormerod K.L."/>
            <person name="Paulet D."/>
            <person name="Byrnes E.J. III"/>
            <person name="Yadav V."/>
            <person name="Chatterjee G."/>
            <person name="Mullapudi N."/>
            <person name="Hon C.-C."/>
            <person name="Billmyre R.B."/>
            <person name="Brunel F."/>
            <person name="Bahn Y.-S."/>
            <person name="Chen W."/>
            <person name="Chen Y."/>
            <person name="Chow E.W.L."/>
            <person name="Coppee J.-Y."/>
            <person name="Floyd-Averette A."/>
            <person name="Gaillardin C."/>
            <person name="Gerik K.J."/>
            <person name="Goldberg J."/>
            <person name="Gonzalez-Hilarion S."/>
            <person name="Gujja S."/>
            <person name="Hamlin J.L."/>
            <person name="Hsueh Y.-P."/>
            <person name="Ianiri G."/>
            <person name="Jones S."/>
            <person name="Kodira C.D."/>
            <person name="Kozubowski L."/>
            <person name="Lam W."/>
            <person name="Marra M."/>
            <person name="Mesner L.D."/>
            <person name="Mieczkowski P.A."/>
            <person name="Moyrand F."/>
            <person name="Nielsen K."/>
            <person name="Proux C."/>
            <person name="Rossignol T."/>
            <person name="Schein J.E."/>
            <person name="Sun S."/>
            <person name="Wollschlaeger C."/>
            <person name="Wood I.A."/>
            <person name="Zeng Q."/>
            <person name="Neuveglise C."/>
            <person name="Newlon C.S."/>
            <person name="Perfect J.R."/>
            <person name="Lodge J.K."/>
            <person name="Idnurm A."/>
            <person name="Stajich J.E."/>
            <person name="Kronstad J.W."/>
            <person name="Sanyal K."/>
            <person name="Heitman J."/>
            <person name="Fraser J.A."/>
            <person name="Cuomo C.A."/>
            <person name="Dietrich F.S."/>
        </authorList>
    </citation>
    <scope>NUCLEOTIDE SEQUENCE [LARGE SCALE GENOMIC DNA]</scope>
    <source>
        <strain>H99 / ATCC 208821 / CBS 10515 / FGSC 9487</strain>
    </source>
</reference>
<reference key="2">
    <citation type="journal article" date="2022" name="MBio">
        <title>The Cryptococcus neoformans Flc1 homologue controls calcium homeostasis and confers fungal pathogenicity in the infected hosts.</title>
        <authorList>
            <person name="Stempinski P.R."/>
            <person name="Goughenour K.D."/>
            <person name="du Plooy L.M."/>
            <person name="Alspaugh J.A."/>
            <person name="Olszewski M.A."/>
            <person name="Kozubowski L."/>
        </authorList>
    </citation>
    <scope>FUNCTION</scope>
    <scope>DISRUPTION PHENOTYPE</scope>
</reference>
<name>FLC1_CRYNH</name>
<dbReference type="EC" id="7.-.-.-" evidence="8"/>
<dbReference type="EMBL" id="CP003828">
    <property type="protein sequence ID" value="AFR97014.1"/>
    <property type="molecule type" value="Genomic_DNA"/>
</dbReference>
<dbReference type="EMBL" id="CP003828">
    <property type="protein sequence ID" value="AGV14598.1"/>
    <property type="molecule type" value="Genomic_DNA"/>
</dbReference>
<dbReference type="RefSeq" id="XP_012051706.1">
    <property type="nucleotide sequence ID" value="XM_012196316.1"/>
</dbReference>
<dbReference type="RefSeq" id="XP_012051707.1">
    <property type="nucleotide sequence ID" value="XM_012196317.1"/>
</dbReference>
<dbReference type="GeneID" id="23887718"/>
<dbReference type="KEGG" id="cng:CNAG_04283"/>
<dbReference type="VEuPathDB" id="FungiDB:CNAG_04283"/>
<dbReference type="HOGENOM" id="CLU_013753_1_0_1"/>
<dbReference type="OrthoDB" id="6154at5206"/>
<dbReference type="Proteomes" id="UP000010091">
    <property type="component" value="Chromosome 9"/>
</dbReference>
<dbReference type="GO" id="GO:0005789">
    <property type="term" value="C:endoplasmic reticulum membrane"/>
    <property type="evidence" value="ECO:0007669"/>
    <property type="project" value="UniProtKB-SubCell"/>
</dbReference>
<dbReference type="GO" id="GO:0009272">
    <property type="term" value="P:fungal-type cell wall biogenesis"/>
    <property type="evidence" value="ECO:0007669"/>
    <property type="project" value="TreeGrafter"/>
</dbReference>
<dbReference type="GO" id="GO:0055085">
    <property type="term" value="P:transmembrane transport"/>
    <property type="evidence" value="ECO:0007669"/>
    <property type="project" value="TreeGrafter"/>
</dbReference>
<dbReference type="InterPro" id="IPR010308">
    <property type="entry name" value="TRP_C"/>
</dbReference>
<dbReference type="InterPro" id="IPR040241">
    <property type="entry name" value="TRP_Flc/Pkd2-like"/>
</dbReference>
<dbReference type="InterPro" id="IPR032800">
    <property type="entry name" value="TRP_N"/>
</dbReference>
<dbReference type="PANTHER" id="PTHR31145:SF2">
    <property type="entry name" value="FLAVIN CARRIER PROTEIN 2"/>
    <property type="match status" value="1"/>
</dbReference>
<dbReference type="PANTHER" id="PTHR31145">
    <property type="entry name" value="INTEGRAL MEMBRANE PROTEIN (AFU_ORTHOLOGUE AFUA_7G01610)"/>
    <property type="match status" value="1"/>
</dbReference>
<dbReference type="Pfam" id="PF06011">
    <property type="entry name" value="TRP"/>
    <property type="match status" value="1"/>
</dbReference>
<dbReference type="Pfam" id="PF14558">
    <property type="entry name" value="TRP_N"/>
    <property type="match status" value="1"/>
</dbReference>
<dbReference type="SMART" id="SM01320">
    <property type="entry name" value="TRP_N"/>
    <property type="match status" value="1"/>
</dbReference>
<accession>J9VWN8</accession>
<comment type="function">
    <text evidence="5">Endoplasmic reticulum membrane flavin carrier protein that plays a crucial role in Ca(2+) signaling/homeostasis via the modulation of the calcineurin-Crz1 stress response pathway which is important for both stress responses and virulence.</text>
</comment>
<comment type="subcellular location">
    <subcellularLocation>
        <location evidence="1">Endoplasmic reticulum membrane</location>
        <topology evidence="2">Multi-pass membrane protein</topology>
    </subcellularLocation>
</comment>
<comment type="disruption phenotype">
    <text evidence="5">Results in cytosolic calcium elevation and increased nuclear content of calcineurin-dependent transcription factor crz1 (PubMed:36169198). Affects cell wall integrity and leads to abnormal distribution of chitin (PubMed:36169198). Sensitizes the cells to the combination of osmotic and temperature shock, affects vacuolar fusion, and interruption of autophagy (PubMed:36169198). Finally, results also in a significant loss of virulence in both the invertebrate and mammalian infection models (PubMed:36169198).</text>
</comment>
<comment type="similarity">
    <text evidence="7">Belongs to the transient receptor potential (TRP) ion channel family.</text>
</comment>
<keyword id="KW-0256">Endoplasmic reticulum</keyword>
<keyword id="KW-0325">Glycoprotein</keyword>
<keyword id="KW-0472">Membrane</keyword>
<keyword id="KW-0732">Signal</keyword>
<keyword id="KW-1278">Translocase</keyword>
<keyword id="KW-0812">Transmembrane</keyword>
<keyword id="KW-1133">Transmembrane helix</keyword>
<keyword id="KW-0813">Transport</keyword>
<keyword id="KW-0843">Virulence</keyword>
<organism>
    <name type="scientific">Cryptococcus neoformans var. grubii serotype A (strain H99 / ATCC 208821 / CBS 10515 / FGSC 9487)</name>
    <name type="common">Filobasidiella neoformans var. grubii</name>
    <dbReference type="NCBI Taxonomy" id="235443"/>
    <lineage>
        <taxon>Eukaryota</taxon>
        <taxon>Fungi</taxon>
        <taxon>Dikarya</taxon>
        <taxon>Basidiomycota</taxon>
        <taxon>Agaricomycotina</taxon>
        <taxon>Tremellomycetes</taxon>
        <taxon>Tremellales</taxon>
        <taxon>Cryptococcaceae</taxon>
        <taxon>Cryptococcus</taxon>
        <taxon>Cryptococcus neoformans species complex</taxon>
    </lineage>
</organism>